<name>Y3498_GLOVI</name>
<evidence type="ECO:0000255" key="1">
    <source>
        <dbReference type="HAMAP-Rule" id="MF_00274"/>
    </source>
</evidence>
<gene>
    <name type="ordered locus">glr3498</name>
</gene>
<organism>
    <name type="scientific">Gloeobacter violaceus (strain ATCC 29082 / PCC 7421)</name>
    <dbReference type="NCBI Taxonomy" id="251221"/>
    <lineage>
        <taxon>Bacteria</taxon>
        <taxon>Bacillati</taxon>
        <taxon>Cyanobacteriota</taxon>
        <taxon>Cyanophyceae</taxon>
        <taxon>Gloeobacterales</taxon>
        <taxon>Gloeobacteraceae</taxon>
        <taxon>Gloeobacter</taxon>
    </lineage>
</organism>
<dbReference type="EMBL" id="BA000045">
    <property type="protein sequence ID" value="BAC91439.1"/>
    <property type="molecule type" value="Genomic_DNA"/>
</dbReference>
<dbReference type="RefSeq" id="NP_926444.1">
    <property type="nucleotide sequence ID" value="NC_005125.1"/>
</dbReference>
<dbReference type="RefSeq" id="WP_011143487.1">
    <property type="nucleotide sequence ID" value="NC_005125.1"/>
</dbReference>
<dbReference type="SMR" id="Q7NFM6"/>
<dbReference type="FunCoup" id="Q7NFM6">
    <property type="interactions" value="39"/>
</dbReference>
<dbReference type="STRING" id="251221.gene:10761010"/>
<dbReference type="EnsemblBacteria" id="BAC91439">
    <property type="protein sequence ID" value="BAC91439"/>
    <property type="gene ID" value="BAC91439"/>
</dbReference>
<dbReference type="KEGG" id="gvi:glr3498"/>
<dbReference type="PATRIC" id="fig|251221.4.peg.3532"/>
<dbReference type="eggNOG" id="COG0718">
    <property type="taxonomic scope" value="Bacteria"/>
</dbReference>
<dbReference type="HOGENOM" id="CLU_140930_0_1_3"/>
<dbReference type="InParanoid" id="Q7NFM6"/>
<dbReference type="OrthoDB" id="487780at2"/>
<dbReference type="PhylomeDB" id="Q7NFM6"/>
<dbReference type="Proteomes" id="UP000000557">
    <property type="component" value="Chromosome"/>
</dbReference>
<dbReference type="GO" id="GO:0043590">
    <property type="term" value="C:bacterial nucleoid"/>
    <property type="evidence" value="ECO:0007669"/>
    <property type="project" value="UniProtKB-UniRule"/>
</dbReference>
<dbReference type="GO" id="GO:0005829">
    <property type="term" value="C:cytosol"/>
    <property type="evidence" value="ECO:0000318"/>
    <property type="project" value="GO_Central"/>
</dbReference>
<dbReference type="GO" id="GO:0003677">
    <property type="term" value="F:DNA binding"/>
    <property type="evidence" value="ECO:0000318"/>
    <property type="project" value="GO_Central"/>
</dbReference>
<dbReference type="Gene3D" id="3.30.1310.10">
    <property type="entry name" value="Nucleoid-associated protein YbaB-like domain"/>
    <property type="match status" value="1"/>
</dbReference>
<dbReference type="HAMAP" id="MF_00274">
    <property type="entry name" value="DNA_YbaB_EbfC"/>
    <property type="match status" value="1"/>
</dbReference>
<dbReference type="InterPro" id="IPR036894">
    <property type="entry name" value="YbaB-like_sf"/>
</dbReference>
<dbReference type="InterPro" id="IPR004401">
    <property type="entry name" value="YbaB/EbfC"/>
</dbReference>
<dbReference type="NCBIfam" id="TIGR00103">
    <property type="entry name" value="DNA_YbaB_EbfC"/>
    <property type="match status" value="1"/>
</dbReference>
<dbReference type="PANTHER" id="PTHR33449">
    <property type="entry name" value="NUCLEOID-ASSOCIATED PROTEIN YBAB"/>
    <property type="match status" value="1"/>
</dbReference>
<dbReference type="PANTHER" id="PTHR33449:SF1">
    <property type="entry name" value="NUCLEOID-ASSOCIATED PROTEIN YBAB"/>
    <property type="match status" value="1"/>
</dbReference>
<dbReference type="Pfam" id="PF02575">
    <property type="entry name" value="YbaB_DNA_bd"/>
    <property type="match status" value="1"/>
</dbReference>
<dbReference type="PIRSF" id="PIRSF004555">
    <property type="entry name" value="UCP004555"/>
    <property type="match status" value="1"/>
</dbReference>
<dbReference type="SUPFAM" id="SSF82607">
    <property type="entry name" value="YbaB-like"/>
    <property type="match status" value="1"/>
</dbReference>
<accession>Q7NFM6</accession>
<comment type="function">
    <text evidence="1">Binds to DNA and alters its conformation. May be involved in regulation of gene expression, nucleoid organization and DNA protection.</text>
</comment>
<comment type="subunit">
    <text evidence="1">Homodimer.</text>
</comment>
<comment type="subcellular location">
    <subcellularLocation>
        <location evidence="1">Cytoplasm</location>
        <location evidence="1">Nucleoid</location>
    </subcellularLocation>
</comment>
<comment type="similarity">
    <text evidence="1">Belongs to the YbaB/EbfC family.</text>
</comment>
<protein>
    <recommendedName>
        <fullName evidence="1">Nucleoid-associated protein glr3498</fullName>
    </recommendedName>
</protein>
<keyword id="KW-0963">Cytoplasm</keyword>
<keyword id="KW-0238">DNA-binding</keyword>
<keyword id="KW-1185">Reference proteome</keyword>
<proteinExistence type="inferred from homology"/>
<reference key="1">
    <citation type="journal article" date="2003" name="DNA Res.">
        <title>Complete genome structure of Gloeobacter violaceus PCC 7421, a cyanobacterium that lacks thylakoids.</title>
        <authorList>
            <person name="Nakamura Y."/>
            <person name="Kaneko T."/>
            <person name="Sato S."/>
            <person name="Mimuro M."/>
            <person name="Miyashita H."/>
            <person name="Tsuchiya T."/>
            <person name="Sasamoto S."/>
            <person name="Watanabe A."/>
            <person name="Kawashima K."/>
            <person name="Kishida Y."/>
            <person name="Kiyokawa C."/>
            <person name="Kohara M."/>
            <person name="Matsumoto M."/>
            <person name="Matsuno A."/>
            <person name="Nakazaki N."/>
            <person name="Shimpo S."/>
            <person name="Takeuchi C."/>
            <person name="Yamada M."/>
            <person name="Tabata S."/>
        </authorList>
    </citation>
    <scope>NUCLEOTIDE SEQUENCE [LARGE SCALE GENOMIC DNA]</scope>
    <source>
        <strain>ATCC 29082 / PCC 7421</strain>
    </source>
</reference>
<feature type="chain" id="PRO_0000170395" description="Nucleoid-associated protein glr3498">
    <location>
        <begin position="1"/>
        <end position="111"/>
    </location>
</feature>
<sequence length="111" mass="11759">MSKGFGPMGQFQEALKRVKQIQEGSAKLQDELAALSIEGVAGGGLVKVTLSGNQEPTGVTIDPQLLSESKEVVEDLLLTAYKDAYTKSAETMKAKMQELTGGMELPPGLGF</sequence>